<keyword id="KW-0002">3D-structure</keyword>
<keyword id="KW-0130">Cell adhesion</keyword>
<keyword id="KW-1003">Cell membrane</keyword>
<keyword id="KW-0903">Direct protein sequencing</keyword>
<keyword id="KW-1015">Disulfide bond</keyword>
<keyword id="KW-0325">Glycoprotein</keyword>
<keyword id="KW-0336">GPI-anchor</keyword>
<keyword id="KW-0378">Hydrolase</keyword>
<keyword id="KW-0449">Lipoprotein</keyword>
<keyword id="KW-0472">Membrane</keyword>
<keyword id="KW-0479">Metal-binding</keyword>
<keyword id="KW-0482">Metalloprotease</keyword>
<keyword id="KW-0645">Protease</keyword>
<keyword id="KW-0732">Signal</keyword>
<keyword id="KW-0862">Zinc</keyword>
<keyword id="KW-0865">Zymogen</keyword>
<sequence length="602" mass="63953">MSVDSSSTHRRRCVAARLVRLAAAGAAVTVAVGTAAAWAHAGALQHRCVHDAMQARVRQSVADHHKAPGAVSAVGLPYVTLDAAHTAAAADPRPGSARSVVRDVNWGALRIAVSTEDLTDPAYHCARVGQHVKDHAGAIVTCTAEDILTNEKRDILVKHLIPQAVQLHTERLKVQQVQGKWKVTDMVGDICGDFKVPQAHITEGFSNTDFVMYVASVPSEEGVLAWATTCQTFSDGHPAVGVINIPAANIASRYDQLVTRVVTHEMAHALGFSGPFFEDARIVANVPNVRGKNFDVPVINSSTAVAKAREQYGCDTLEYLEVEDQGGAGSAGSHIKMRNAQDELMAPAAAAGYYTALTMAIFQDLGFYQADFSKAEVMPWGQNAGCAFLTNKCMEQSVTQWPAMFCNESEDAIRCPTSRLSLGACGVTRHPGLPPYWQYFTDPSLAGVSAFMDYCPVVVPYSDGSCTQRASEAHASLLPFNVFSDAARCIDGAFRPKATDGIVKSYAGLCANVQCDTATRTYSVQVHGSNDYTNCTPGLRVELSTVSNAFEGGGYITCPPYVEVCQGNVQAAKDGGNTAAGRRGPRAAATALLVAALLAVAL</sequence>
<accession>P08148</accession>
<accession>P15906</accession>
<dbReference type="EC" id="3.4.24.36"/>
<dbReference type="EMBL" id="Y00647">
    <property type="protein sequence ID" value="CAA68673.1"/>
    <property type="molecule type" value="Genomic_DNA"/>
</dbReference>
<dbReference type="PIR" id="PL0221">
    <property type="entry name" value="PL0221"/>
</dbReference>
<dbReference type="PDB" id="1LML">
    <property type="method" value="X-ray"/>
    <property type="resolution" value="1.86 A"/>
    <property type="chains" value="A=100-577"/>
</dbReference>
<dbReference type="PDBsum" id="1LML"/>
<dbReference type="SMR" id="P08148"/>
<dbReference type="MEROPS" id="M08.001"/>
<dbReference type="GlyConnect" id="335">
    <property type="glycosylation" value="2 N-Linked glycans"/>
</dbReference>
<dbReference type="GlyCosmos" id="P08148">
    <property type="glycosylation" value="3 sites, 4 glycans"/>
</dbReference>
<dbReference type="iPTMnet" id="P08148"/>
<dbReference type="VEuPathDB" id="TriTrypDB:LmjF.10.0480"/>
<dbReference type="VEuPathDB" id="TriTrypDB:LMJFC_100011800"/>
<dbReference type="VEuPathDB" id="TriTrypDB:LMJLV39_100010200"/>
<dbReference type="VEuPathDB" id="TriTrypDB:LMJSD75_100010300"/>
<dbReference type="eggNOG" id="KOG2556">
    <property type="taxonomic scope" value="Eukaryota"/>
</dbReference>
<dbReference type="BRENDA" id="3.4.24.36">
    <property type="organism ID" value="2950"/>
</dbReference>
<dbReference type="EvolutionaryTrace" id="P08148"/>
<dbReference type="GO" id="GO:0005886">
    <property type="term" value="C:plasma membrane"/>
    <property type="evidence" value="ECO:0007669"/>
    <property type="project" value="UniProtKB-SubCell"/>
</dbReference>
<dbReference type="GO" id="GO:0098552">
    <property type="term" value="C:side of membrane"/>
    <property type="evidence" value="ECO:0007669"/>
    <property type="project" value="UniProtKB-KW"/>
</dbReference>
<dbReference type="GO" id="GO:0046872">
    <property type="term" value="F:metal ion binding"/>
    <property type="evidence" value="ECO:0007669"/>
    <property type="project" value="UniProtKB-KW"/>
</dbReference>
<dbReference type="GO" id="GO:0004222">
    <property type="term" value="F:metalloendopeptidase activity"/>
    <property type="evidence" value="ECO:0007669"/>
    <property type="project" value="InterPro"/>
</dbReference>
<dbReference type="GO" id="GO:0008237">
    <property type="term" value="F:metallopeptidase activity"/>
    <property type="evidence" value="ECO:0000315"/>
    <property type="project" value="ParkinsonsUK-UCL"/>
</dbReference>
<dbReference type="GO" id="GO:0007155">
    <property type="term" value="P:cell adhesion"/>
    <property type="evidence" value="ECO:0007669"/>
    <property type="project" value="UniProtKB-KW"/>
</dbReference>
<dbReference type="GO" id="GO:0006508">
    <property type="term" value="P:proteolysis"/>
    <property type="evidence" value="ECO:0000315"/>
    <property type="project" value="ParkinsonsUK-UCL"/>
</dbReference>
<dbReference type="GO" id="GO:0052028">
    <property type="term" value="P:symbiont-mediated activation of host signal transduction pathway"/>
    <property type="evidence" value="ECO:0000315"/>
    <property type="project" value="ParkinsonsUK-UCL"/>
</dbReference>
<dbReference type="GO" id="GO:0052032">
    <property type="term" value="P:symbiont-mediated perturbation of host inflammatory response"/>
    <property type="evidence" value="ECO:0000315"/>
    <property type="project" value="ParkinsonsUK-UCL"/>
</dbReference>
<dbReference type="GO" id="GO:0141115">
    <property type="term" value="P:symbiont-mediated suppression of host complement activation by inactivation of complement proteins"/>
    <property type="evidence" value="ECO:0000269"/>
    <property type="project" value="SigSci"/>
</dbReference>
<dbReference type="GO" id="GO:0039514">
    <property type="term" value="P:symbiont-mediated suppression of host JAK-STAT cascade"/>
    <property type="evidence" value="ECO:0000269"/>
    <property type="project" value="SigSci"/>
</dbReference>
<dbReference type="FunFam" id="2.30.34.10:FF:000004">
    <property type="entry name" value="GP63, leishmanolysin"/>
    <property type="match status" value="1"/>
</dbReference>
<dbReference type="FunFam" id="3.90.132.10:FF:000001">
    <property type="entry name" value="leishmanolysin-like peptidase isoform X2"/>
    <property type="match status" value="1"/>
</dbReference>
<dbReference type="FunFam" id="2.10.55.10:FF:000003">
    <property type="entry name" value="MSP-A1 surface protease homolog"/>
    <property type="match status" value="1"/>
</dbReference>
<dbReference type="FunFam" id="3.10.170.20:FF:000005">
    <property type="entry name" value="MSP-A1 surface protease homolog"/>
    <property type="match status" value="1"/>
</dbReference>
<dbReference type="Gene3D" id="3.10.170.20">
    <property type="match status" value="1"/>
</dbReference>
<dbReference type="Gene3D" id="3.90.132.10">
    <property type="entry name" value="Leishmanolysin , domain 2"/>
    <property type="match status" value="1"/>
</dbReference>
<dbReference type="Gene3D" id="2.10.55.10">
    <property type="entry name" value="Leishmanolysin domain 3"/>
    <property type="match status" value="1"/>
</dbReference>
<dbReference type="Gene3D" id="2.30.34.10">
    <property type="entry name" value="Leishmanolysin domain 4"/>
    <property type="match status" value="1"/>
</dbReference>
<dbReference type="InterPro" id="IPR001577">
    <property type="entry name" value="Peptidase_M8"/>
</dbReference>
<dbReference type="PANTHER" id="PTHR10942">
    <property type="entry name" value="LEISHMANOLYSIN-LIKE PEPTIDASE"/>
    <property type="match status" value="1"/>
</dbReference>
<dbReference type="PANTHER" id="PTHR10942:SF0">
    <property type="entry name" value="LEISHMANOLYSIN-LIKE PEPTIDASE"/>
    <property type="match status" value="1"/>
</dbReference>
<dbReference type="Pfam" id="PF01457">
    <property type="entry name" value="Peptidase_M8"/>
    <property type="match status" value="1"/>
</dbReference>
<dbReference type="PRINTS" id="PR00782">
    <property type="entry name" value="LSHMANOLYSIN"/>
</dbReference>
<dbReference type="SUPFAM" id="SSF55486">
    <property type="entry name" value="Metalloproteases ('zincins'), catalytic domain"/>
    <property type="match status" value="1"/>
</dbReference>
<dbReference type="PROSITE" id="PS00142">
    <property type="entry name" value="ZINC_PROTEASE"/>
    <property type="match status" value="1"/>
</dbReference>
<comment type="function">
    <text>Has an integral role during the infection of macrophages in the mammalian host.</text>
</comment>
<comment type="catalytic activity">
    <reaction>
        <text>Preference for hydrophobic residues at P1 and P1' and basic residues at P2' and P3'. A model nonapeptide is cleaved at -Ala-Tyr-|-Leu-Lys-Lys-.</text>
        <dbReference type="EC" id="3.4.24.36"/>
    </reaction>
</comment>
<comment type="cofactor">
    <cofactor>
        <name>Zn(2+)</name>
        <dbReference type="ChEBI" id="CHEBI:29105"/>
    </cofactor>
    <text evidence="9">Binds 1 zinc ion per subunit.</text>
</comment>
<comment type="subcellular location">
    <subcellularLocation>
        <location>Cell membrane</location>
        <topology>Lipid-anchor</topology>
        <topology>GPI-anchor</topology>
    </subcellularLocation>
</comment>
<comment type="PTM">
    <text>The phosphatidylinositol moiety of the GPI-anchor contains a fully saturated, unbranched 1-O-alkyl chain (mainly C24:0) and a mixture of fully saturated unbranched 2-O-acyl chains (C12:0, C14:0, C16:0, and C18:0).</text>
</comment>
<comment type="similarity">
    <text evidence="10">Belongs to the peptidase M8 family.</text>
</comment>
<proteinExistence type="evidence at protein level"/>
<protein>
    <recommendedName>
        <fullName>Leishmanolysin</fullName>
        <ecNumber>3.4.24.36</ecNumber>
    </recommendedName>
    <alternativeName>
        <fullName>Cell surface protease</fullName>
    </alternativeName>
    <alternativeName>
        <fullName>Major surface glycoprotein</fullName>
    </alternativeName>
    <alternativeName>
        <fullName>Major surface protease</fullName>
    </alternativeName>
    <alternativeName>
        <fullName>Promastigote surface endopeptidase</fullName>
    </alternativeName>
    <alternativeName>
        <fullName>Protein gp63</fullName>
    </alternativeName>
</protein>
<organism>
    <name type="scientific">Leishmania major</name>
    <dbReference type="NCBI Taxonomy" id="5664"/>
    <lineage>
        <taxon>Eukaryota</taxon>
        <taxon>Discoba</taxon>
        <taxon>Euglenozoa</taxon>
        <taxon>Kinetoplastea</taxon>
        <taxon>Metakinetoplastina</taxon>
        <taxon>Trypanosomatida</taxon>
        <taxon>Trypanosomatidae</taxon>
        <taxon>Leishmaniinae</taxon>
        <taxon>Leishmania</taxon>
    </lineage>
</organism>
<feature type="signal peptide" evidence="1">
    <location>
        <begin position="1"/>
        <end position="39"/>
    </location>
</feature>
<feature type="propeptide" id="PRO_0000028667" description="Activation peptide" evidence="5">
    <location>
        <begin position="40"/>
        <end position="100"/>
    </location>
</feature>
<feature type="chain" id="PRO_0000028668" description="Leishmanolysin">
    <location>
        <begin position="101"/>
        <end position="577"/>
    </location>
</feature>
<feature type="propeptide" id="PRO_0000028669" description="Removed in mature form" evidence="4">
    <location>
        <begin position="578"/>
        <end position="602"/>
    </location>
</feature>
<feature type="active site" evidence="3 9">
    <location>
        <position position="265"/>
    </location>
</feature>
<feature type="binding site" evidence="3 9">
    <location>
        <position position="264"/>
    </location>
    <ligand>
        <name>Zn(2+)</name>
        <dbReference type="ChEBI" id="CHEBI:29105"/>
        <note>catalytic</note>
    </ligand>
</feature>
<feature type="binding site" evidence="3 9">
    <location>
        <position position="268"/>
    </location>
    <ligand>
        <name>Zn(2+)</name>
        <dbReference type="ChEBI" id="CHEBI:29105"/>
        <note>catalytic</note>
    </ligand>
</feature>
<feature type="binding site" evidence="3 9">
    <location>
        <position position="334"/>
    </location>
    <ligand>
        <name>Zn(2+)</name>
        <dbReference type="ChEBI" id="CHEBI:29105"/>
        <note>catalytic</note>
    </ligand>
</feature>
<feature type="lipid moiety-binding region" description="GPI-anchor amidated asparagine" evidence="4">
    <location>
        <position position="577"/>
    </location>
</feature>
<feature type="glycosylation site" description="N-linked (GlcNAc...) asparagine" evidence="2 6 8">
    <location>
        <position position="300"/>
    </location>
</feature>
<feature type="glycosylation site" description="N-linked (GlcNAc...) asparagine" evidence="2 6 8">
    <location>
        <position position="407"/>
    </location>
</feature>
<feature type="glycosylation site" description="N-linked (GlcNAc...) asparagine" evidence="6">
    <location>
        <position position="534"/>
    </location>
</feature>
<feature type="disulfide bond" evidence="6">
    <location>
        <begin position="125"/>
        <end position="142"/>
    </location>
</feature>
<feature type="disulfide bond" evidence="6">
    <location>
        <begin position="191"/>
        <end position="230"/>
    </location>
</feature>
<feature type="disulfide bond" evidence="6">
    <location>
        <begin position="314"/>
        <end position="386"/>
    </location>
</feature>
<feature type="disulfide bond" evidence="6">
    <location>
        <begin position="393"/>
        <end position="455"/>
    </location>
</feature>
<feature type="disulfide bond" evidence="6">
    <location>
        <begin position="406"/>
        <end position="425"/>
    </location>
</feature>
<feature type="disulfide bond" evidence="6">
    <location>
        <begin position="415"/>
        <end position="489"/>
    </location>
</feature>
<feature type="disulfide bond" evidence="6">
    <location>
        <begin position="466"/>
        <end position="510"/>
    </location>
</feature>
<feature type="disulfide bond" evidence="6">
    <location>
        <begin position="515"/>
        <end position="565"/>
    </location>
</feature>
<feature type="disulfide bond" evidence="6">
    <location>
        <begin position="535"/>
        <end position="558"/>
    </location>
</feature>
<feature type="mutagenesis site" description="No significant effect on protein expression levels or catalytic activity." evidence="7">
    <original>Y</original>
    <variation>D</variation>
    <location>
        <position position="254"/>
    </location>
</feature>
<feature type="mutagenesis site" description="No detectable overexpression of mutant protein and hence little catalytic activity." evidence="7">
    <original>H</original>
    <variation>F</variation>
    <variation>Y</variation>
    <location>
        <position position="264"/>
    </location>
</feature>
<feature type="mutagenesis site" description="No significant effect on protein expression levels but almost abolishes catalytic activity." evidence="7">
    <original>E</original>
    <variation>D</variation>
    <location>
        <position position="265"/>
    </location>
</feature>
<feature type="mutagenesis site" description="No detectable overexpression of mutant protein and hence little catalytic activity." evidence="7">
    <original>H</original>
    <variation>N</variation>
    <variation>Y</variation>
    <location>
        <position position="268"/>
    </location>
</feature>
<feature type="mutagenesis site" description="Increases electrophoretic mobility of the protein." evidence="7">
    <original>N</original>
    <variation>Q</variation>
    <location>
        <position position="300"/>
    </location>
</feature>
<feature type="mutagenesis site" description="Increases electrophoretic mobility of the protein." evidence="7">
    <original>N</original>
    <variation>Q</variation>
    <location>
        <position position="407"/>
    </location>
</feature>
<feature type="mutagenesis site" description="Increases electrophoretic mobility of the protein." evidence="7">
    <original>N</original>
    <variation>Q</variation>
    <location>
        <position position="534"/>
    </location>
</feature>
<feature type="mutagenesis site" description="Causes extracellular release of the protein." evidence="7">
    <original>N</original>
    <variation>L</variation>
    <location>
        <position position="577"/>
    </location>
</feature>
<feature type="strand" evidence="11">
    <location>
        <begin position="111"/>
        <end position="114"/>
    </location>
</feature>
<feature type="helix" evidence="11">
    <location>
        <begin position="116"/>
        <end position="119"/>
    </location>
</feature>
<feature type="strand" evidence="11">
    <location>
        <begin position="131"/>
        <end position="133"/>
    </location>
</feature>
<feature type="strand" evidence="11">
    <location>
        <begin position="135"/>
        <end position="137"/>
    </location>
</feature>
<feature type="strand" evidence="11">
    <location>
        <begin position="139"/>
        <end position="141"/>
    </location>
</feature>
<feature type="helix" evidence="11">
    <location>
        <begin position="144"/>
        <end position="146"/>
    </location>
</feature>
<feature type="helix" evidence="11">
    <location>
        <begin position="150"/>
        <end position="158"/>
    </location>
</feature>
<feature type="helix" evidence="11">
    <location>
        <begin position="160"/>
        <end position="169"/>
    </location>
</feature>
<feature type="strand" evidence="11">
    <location>
        <begin position="172"/>
        <end position="174"/>
    </location>
</feature>
<feature type="strand" evidence="11">
    <location>
        <begin position="177"/>
        <end position="181"/>
    </location>
</feature>
<feature type="helix" evidence="11">
    <location>
        <begin position="191"/>
        <end position="193"/>
    </location>
</feature>
<feature type="helix" evidence="11">
    <location>
        <begin position="198"/>
        <end position="202"/>
    </location>
</feature>
<feature type="strand" evidence="11">
    <location>
        <begin position="205"/>
        <end position="207"/>
    </location>
</feature>
<feature type="strand" evidence="11">
    <location>
        <begin position="209"/>
        <end position="215"/>
    </location>
</feature>
<feature type="strand" evidence="11">
    <location>
        <begin position="226"/>
        <end position="232"/>
    </location>
</feature>
<feature type="strand" evidence="11">
    <location>
        <begin position="238"/>
        <end position="244"/>
    </location>
</feature>
<feature type="helix" evidence="11">
    <location>
        <begin position="247"/>
        <end position="249"/>
    </location>
</feature>
<feature type="helix" evidence="11">
    <location>
        <begin position="256"/>
        <end position="269"/>
    </location>
</feature>
<feature type="helix" evidence="11">
    <location>
        <begin position="274"/>
        <end position="279"/>
    </location>
</feature>
<feature type="strand" evidence="11">
    <location>
        <begin position="283"/>
        <end position="287"/>
    </location>
</feature>
<feature type="helix" evidence="11">
    <location>
        <begin position="289"/>
        <end position="291"/>
    </location>
</feature>
<feature type="strand" evidence="11">
    <location>
        <begin position="296"/>
        <end position="299"/>
    </location>
</feature>
<feature type="helix" evidence="11">
    <location>
        <begin position="302"/>
        <end position="312"/>
    </location>
</feature>
<feature type="strand" evidence="11">
    <location>
        <begin position="320"/>
        <end position="322"/>
    </location>
</feature>
<feature type="turn" evidence="11">
    <location>
        <begin position="328"/>
        <end position="332"/>
    </location>
</feature>
<feature type="strand" evidence="11">
    <location>
        <begin position="333"/>
        <end position="335"/>
    </location>
</feature>
<feature type="turn" evidence="11">
    <location>
        <begin position="337"/>
        <end position="339"/>
    </location>
</feature>
<feature type="strand" evidence="11">
    <location>
        <begin position="346"/>
        <end position="348"/>
    </location>
</feature>
<feature type="helix" evidence="11">
    <location>
        <begin position="356"/>
        <end position="364"/>
    </location>
</feature>
<feature type="helix" evidence="11">
    <location>
        <begin position="372"/>
        <end position="374"/>
    </location>
</feature>
<feature type="turn" evidence="11">
    <location>
        <begin position="380"/>
        <end position="383"/>
    </location>
</feature>
<feature type="helix" evidence="11">
    <location>
        <begin position="386"/>
        <end position="390"/>
    </location>
</feature>
<feature type="strand" evidence="11">
    <location>
        <begin position="393"/>
        <end position="395"/>
    </location>
</feature>
<feature type="strand" evidence="11">
    <location>
        <begin position="398"/>
        <end position="400"/>
    </location>
</feature>
<feature type="turn" evidence="11">
    <location>
        <begin position="402"/>
        <end position="404"/>
    </location>
</feature>
<feature type="strand" evidence="11">
    <location>
        <begin position="420"/>
        <end position="425"/>
    </location>
</feature>
<feature type="helix" evidence="11">
    <location>
        <begin position="435"/>
        <end position="437"/>
    </location>
</feature>
<feature type="strand" evidence="11">
    <location>
        <begin position="440"/>
        <end position="442"/>
    </location>
</feature>
<feature type="turn" evidence="11">
    <location>
        <begin position="450"/>
        <end position="454"/>
    </location>
</feature>
<feature type="strand" evidence="11">
    <location>
        <begin position="458"/>
        <end position="465"/>
    </location>
</feature>
<feature type="helix" evidence="11">
    <location>
        <begin position="470"/>
        <end position="472"/>
    </location>
</feature>
<feature type="turn" evidence="11">
    <location>
        <begin position="475"/>
        <end position="477"/>
    </location>
</feature>
<feature type="helix" evidence="11">
    <location>
        <begin position="478"/>
        <end position="480"/>
    </location>
</feature>
<feature type="strand" evidence="11">
    <location>
        <begin position="487"/>
        <end position="494"/>
    </location>
</feature>
<feature type="strand" evidence="11">
    <location>
        <begin position="506"/>
        <end position="516"/>
    </location>
</feature>
<feature type="turn" evidence="11">
    <location>
        <begin position="517"/>
        <end position="520"/>
    </location>
</feature>
<feature type="strand" evidence="11">
    <location>
        <begin position="521"/>
        <end position="525"/>
    </location>
</feature>
<feature type="strand" evidence="11">
    <location>
        <begin position="540"/>
        <end position="542"/>
    </location>
</feature>
<feature type="helix" evidence="11">
    <location>
        <begin position="543"/>
        <end position="545"/>
    </location>
</feature>
<feature type="strand" evidence="11">
    <location>
        <begin position="548"/>
        <end position="550"/>
    </location>
</feature>
<feature type="strand" evidence="11">
    <location>
        <begin position="555"/>
        <end position="557"/>
    </location>
</feature>
<feature type="helix" evidence="11">
    <location>
        <begin position="561"/>
        <end position="565"/>
    </location>
</feature>
<feature type="helix" evidence="11">
    <location>
        <begin position="569"/>
        <end position="572"/>
    </location>
</feature>
<reference key="1">
    <citation type="journal article" date="1988" name="J. Exp. Med.">
        <title>Molecular cloning of the major surface antigen of leishmania.</title>
        <authorList>
            <person name="Button L.L."/>
            <person name="McMaster W.R."/>
        </authorList>
    </citation>
    <scope>NUCLEOTIDE SEQUENCE [GENOMIC DNA]</scope>
    <scope>PROTEIN SEQUENCE OF 101-123</scope>
</reference>
<reference key="2">
    <citation type="journal article" date="1990" name="J. Exp. Med.">
        <authorList>
            <person name="Button L.L."/>
            <person name="McMaster W.R."/>
        </authorList>
    </citation>
    <scope>SEQUENCE REVISION</scope>
</reference>
<reference key="3">
    <citation type="journal article" date="1990" name="J. Biol. Chem.">
        <title>Structure of the glycosyl-phosphatidylinositol membrane anchor of the Leishmania major promastigote surface protease.</title>
        <authorList>
            <person name="Schneider P."/>
            <person name="Ferguson M.A.J."/>
            <person name="McConville M.J."/>
            <person name="Mehlert A."/>
            <person name="Homans S.W."/>
            <person name="Bordier C."/>
        </authorList>
    </citation>
    <scope>GPI-ANCHOR AT ASN-577</scope>
    <scope>PROTEIN SEQUENCE OF 574-577</scope>
</reference>
<reference key="4">
    <citation type="journal article" date="1996" name="J. Biol. Chem.">
        <title>Posttranslational regulation of a Leishmania HEXXH metalloprotease (gp63). The effects of site-specific mutagenesis of catalytic, zinc binding, N-glycosylation, and glycosyl phosphatidylinositol addition sites on N-terminal end cleavage, intracellular stability, and extracellular exit.</title>
        <authorList>
            <person name="McGwire B.S."/>
            <person name="Chang K.-P."/>
        </authorList>
    </citation>
    <scope>MUTAGENESIS OF TYR-254; HIS-264; GLU-265; HIS-268; ASN-300; ASN-407; ASN-534 AND ASN-577</scope>
</reference>
<reference key="5">
    <citation type="journal article" date="1997" name="Mol. Biochem. Parasitol.">
        <title>A unique, terminally glucosylated oligosaccharide is a common feature on Leishmania cell surfaces.</title>
        <authorList>
            <person name="Funk V.A."/>
            <person name="Thomas-Oates J.E."/>
            <person name="Kielland S.L."/>
            <person name="Bates P.A."/>
            <person name="Olafson R.W."/>
        </authorList>
    </citation>
    <scope>GLYCOSYLATION AT ASN-300 AND ASN-407</scope>
</reference>
<reference key="6">
    <citation type="journal article" date="1995" name="Proteins">
        <title>Crystallization and preliminary X-ray diffraction studies of leishmanolysin, the major surface metalloproteinase from Leishmania major.</title>
        <authorList>
            <person name="Schlagenhauf E."/>
            <person name="Etges R."/>
            <person name="Metcalf P."/>
        </authorList>
    </citation>
    <scope>X-RAY CRYSTALLOGRAPHY (2.6 ANGSTROMS)</scope>
    <scope>DISULFIDE BONDS</scope>
    <scope>GLYCOSYLATION AT ASN-300; ASN-407 AND ASN-534</scope>
</reference>
<reference key="7">
    <citation type="journal article" date="1998" name="Structure">
        <title>The crystal structure of the Leishmania major surface proteinase leishmanolysin.</title>
        <authorList>
            <person name="Schlagenhauf E."/>
            <person name="Etges R."/>
            <person name="Metcalf P."/>
        </authorList>
    </citation>
    <scope>X-RAY CRYSTALLOGRAPHY (1.86 ANGSTROMS) IN COMPLEX WITH ZINC</scope>
    <scope>ACTIVE SITE</scope>
</reference>
<name>GP63_LEIMA</name>
<evidence type="ECO:0000255" key="1"/>
<evidence type="ECO:0000255" key="2">
    <source>
        <dbReference type="PROSITE-ProRule" id="PRU00498"/>
    </source>
</evidence>
<evidence type="ECO:0000255" key="3">
    <source>
        <dbReference type="PROSITE-ProRule" id="PRU10095"/>
    </source>
</evidence>
<evidence type="ECO:0000269" key="4">
    <source>
    </source>
</evidence>
<evidence type="ECO:0000269" key="5">
    <source>
    </source>
</evidence>
<evidence type="ECO:0000269" key="6">
    <source>
    </source>
</evidence>
<evidence type="ECO:0000269" key="7">
    <source>
    </source>
</evidence>
<evidence type="ECO:0000269" key="8">
    <source>
    </source>
</evidence>
<evidence type="ECO:0000269" key="9">
    <source>
    </source>
</evidence>
<evidence type="ECO:0000305" key="10"/>
<evidence type="ECO:0007829" key="11">
    <source>
        <dbReference type="PDB" id="1LML"/>
    </source>
</evidence>
<gene>
    <name type="primary">gp63</name>
</gene>